<feature type="chain" id="PRO_0000327655" description="TBC1 domain family member 12">
    <location>
        <begin position="1"/>
        <end position="696"/>
    </location>
</feature>
<feature type="domain" description="Rab-GAP TBC" evidence="4">
    <location>
        <begin position="405"/>
        <end position="613"/>
    </location>
</feature>
<feature type="region of interest" description="Disordered" evidence="5">
    <location>
        <begin position="1"/>
        <end position="59"/>
    </location>
</feature>
<feature type="region of interest" description="Disordered" evidence="5">
    <location>
        <begin position="91"/>
        <end position="121"/>
    </location>
</feature>
<feature type="region of interest" description="Disordered" evidence="5">
    <location>
        <begin position="156"/>
        <end position="234"/>
    </location>
</feature>
<feature type="coiled-coil region" evidence="3">
    <location>
        <begin position="330"/>
        <end position="373"/>
    </location>
</feature>
<feature type="compositionally biased region" description="Acidic residues" evidence="5">
    <location>
        <begin position="46"/>
        <end position="55"/>
    </location>
</feature>
<feature type="compositionally biased region" description="Basic and acidic residues" evidence="5">
    <location>
        <begin position="108"/>
        <end position="118"/>
    </location>
</feature>
<feature type="compositionally biased region" description="Low complexity" evidence="5">
    <location>
        <begin position="209"/>
        <end position="222"/>
    </location>
</feature>
<feature type="modified residue" description="N-acetylmethionine" evidence="2">
    <location>
        <position position="1"/>
    </location>
</feature>
<feature type="modified residue" description="Phosphoserine" evidence="8 9">
    <location>
        <position position="205"/>
    </location>
</feature>
<feature type="modified residue" description="Phosphoserine" evidence="2">
    <location>
        <position position="236"/>
    </location>
</feature>
<feature type="modified residue" description="Phosphoserine" evidence="2">
    <location>
        <position position="668"/>
    </location>
</feature>
<feature type="modified residue" description="Phosphothreonine" evidence="2">
    <location>
        <position position="669"/>
    </location>
</feature>
<protein>
    <recommendedName>
        <fullName>TBC1 domain family member 12</fullName>
    </recommendedName>
</protein>
<name>TBC12_MOUSE</name>
<accession>Q6A039</accession>
<accession>B2RQS2</accession>
<proteinExistence type="evidence at protein level"/>
<comment type="function">
    <text evidence="1">RAB11A-binding protein that plays a role in neurite outgrowth.</text>
</comment>
<comment type="subunit">
    <text evidence="2">Interacts with RAB11A; this interaction recruits TBC1D12 to RAB11A-positive recycling endosomes.</text>
</comment>
<comment type="subcellular location">
    <subcellularLocation>
        <location evidence="6">Endosome</location>
    </subcellularLocation>
</comment>
<comment type="sequence caution" evidence="7">
    <conflict type="erroneous initiation">
        <sequence resource="EMBL-CDS" id="BAD32257"/>
    </conflict>
</comment>
<gene>
    <name type="primary">Tbc1d12</name>
    <name type="synonym">Kiaa0608</name>
</gene>
<dbReference type="EMBL" id="AK172979">
    <property type="protein sequence ID" value="BAD32257.1"/>
    <property type="status" value="ALT_INIT"/>
    <property type="molecule type" value="mRNA"/>
</dbReference>
<dbReference type="EMBL" id="BC138056">
    <property type="protein sequence ID" value="AAI38057.1"/>
    <property type="molecule type" value="mRNA"/>
</dbReference>
<dbReference type="EMBL" id="BC138057">
    <property type="protein sequence ID" value="AAI38058.1"/>
    <property type="molecule type" value="mRNA"/>
</dbReference>
<dbReference type="RefSeq" id="NP_666064.3">
    <property type="nucleotide sequence ID" value="NM_145952.3"/>
</dbReference>
<dbReference type="SMR" id="Q6A039"/>
<dbReference type="FunCoup" id="Q6A039">
    <property type="interactions" value="794"/>
</dbReference>
<dbReference type="STRING" id="10090.ENSMUSP00000037884"/>
<dbReference type="GlyGen" id="Q6A039">
    <property type="glycosylation" value="1 site"/>
</dbReference>
<dbReference type="iPTMnet" id="Q6A039"/>
<dbReference type="PhosphoSitePlus" id="Q6A039"/>
<dbReference type="jPOST" id="Q6A039"/>
<dbReference type="PaxDb" id="10090-ENSMUSP00000037884"/>
<dbReference type="ProteomicsDB" id="263129"/>
<dbReference type="Pumba" id="Q6A039"/>
<dbReference type="DNASU" id="209478"/>
<dbReference type="GeneID" id="209478"/>
<dbReference type="KEGG" id="mmu:209478"/>
<dbReference type="AGR" id="MGI:2384803"/>
<dbReference type="CTD" id="23232"/>
<dbReference type="MGI" id="MGI:2384803">
    <property type="gene designation" value="Tbc1d12"/>
</dbReference>
<dbReference type="eggNOG" id="KOG2223">
    <property type="taxonomic scope" value="Eukaryota"/>
</dbReference>
<dbReference type="InParanoid" id="Q6A039"/>
<dbReference type="OrthoDB" id="294251at2759"/>
<dbReference type="PhylomeDB" id="Q6A039"/>
<dbReference type="BioGRID-ORCS" id="209478">
    <property type="hits" value="2 hits in 79 CRISPR screens"/>
</dbReference>
<dbReference type="ChiTaRS" id="Tbc1d12">
    <property type="organism name" value="mouse"/>
</dbReference>
<dbReference type="PRO" id="PR:Q6A039"/>
<dbReference type="Proteomes" id="UP000000589">
    <property type="component" value="Unplaced"/>
</dbReference>
<dbReference type="RNAct" id="Q6A039">
    <property type="molecule type" value="protein"/>
</dbReference>
<dbReference type="GO" id="GO:0005768">
    <property type="term" value="C:endosome"/>
    <property type="evidence" value="ECO:0007669"/>
    <property type="project" value="UniProtKB-SubCell"/>
</dbReference>
<dbReference type="GO" id="GO:0005096">
    <property type="term" value="F:GTPase activator activity"/>
    <property type="evidence" value="ECO:0007669"/>
    <property type="project" value="UniProtKB-KW"/>
</dbReference>
<dbReference type="FunFam" id="1.10.8.270:FF:000008">
    <property type="entry name" value="Putative TBC1 domain family member 14"/>
    <property type="match status" value="1"/>
</dbReference>
<dbReference type="FunFam" id="1.10.10.750:FF:000005">
    <property type="entry name" value="TBC1 domain family member 14"/>
    <property type="match status" value="1"/>
</dbReference>
<dbReference type="FunFam" id="1.10.472.80:FF:000006">
    <property type="entry name" value="TBC1 domain family member 14"/>
    <property type="match status" value="1"/>
</dbReference>
<dbReference type="Gene3D" id="1.10.8.270">
    <property type="entry name" value="putative rabgap domain of human tbc1 domain family member 14 like domains"/>
    <property type="match status" value="1"/>
</dbReference>
<dbReference type="Gene3D" id="1.10.10.750">
    <property type="entry name" value="Ypt/Rab-GAP domain of gyp1p, domain 1"/>
    <property type="match status" value="1"/>
</dbReference>
<dbReference type="Gene3D" id="1.10.472.80">
    <property type="entry name" value="Ypt/Rab-GAP domain of gyp1p, domain 3"/>
    <property type="match status" value="1"/>
</dbReference>
<dbReference type="InterPro" id="IPR000195">
    <property type="entry name" value="Rab-GAP-TBC_dom"/>
</dbReference>
<dbReference type="InterPro" id="IPR035969">
    <property type="entry name" value="Rab-GAP_TBC_sf"/>
</dbReference>
<dbReference type="InterPro" id="IPR050302">
    <property type="entry name" value="Rab_GAP_TBC_domain"/>
</dbReference>
<dbReference type="PANTHER" id="PTHR47219">
    <property type="entry name" value="RAB GTPASE-ACTIVATING PROTEIN 1-LIKE"/>
    <property type="match status" value="1"/>
</dbReference>
<dbReference type="PANTHER" id="PTHR47219:SF15">
    <property type="entry name" value="TBC1 DOMAIN FAMILY MEMBER 12 ISOFORM X1"/>
    <property type="match status" value="1"/>
</dbReference>
<dbReference type="Pfam" id="PF00566">
    <property type="entry name" value="RabGAP-TBC"/>
    <property type="match status" value="1"/>
</dbReference>
<dbReference type="SMART" id="SM00164">
    <property type="entry name" value="TBC"/>
    <property type="match status" value="1"/>
</dbReference>
<dbReference type="SUPFAM" id="SSF47923">
    <property type="entry name" value="Ypt/Rab-GAP domain of gyp1p"/>
    <property type="match status" value="2"/>
</dbReference>
<dbReference type="PROSITE" id="PS50086">
    <property type="entry name" value="TBC_RABGAP"/>
    <property type="match status" value="1"/>
</dbReference>
<organism>
    <name type="scientific">Mus musculus</name>
    <name type="common">Mouse</name>
    <dbReference type="NCBI Taxonomy" id="10090"/>
    <lineage>
        <taxon>Eukaryota</taxon>
        <taxon>Metazoa</taxon>
        <taxon>Chordata</taxon>
        <taxon>Craniata</taxon>
        <taxon>Vertebrata</taxon>
        <taxon>Euteleostomi</taxon>
        <taxon>Mammalia</taxon>
        <taxon>Eutheria</taxon>
        <taxon>Euarchontoglires</taxon>
        <taxon>Glires</taxon>
        <taxon>Rodentia</taxon>
        <taxon>Myomorpha</taxon>
        <taxon>Muroidea</taxon>
        <taxon>Muridae</taxon>
        <taxon>Murinae</taxon>
        <taxon>Mus</taxon>
        <taxon>Mus</taxon>
    </lineage>
</organism>
<reference key="1">
    <citation type="journal article" date="2004" name="DNA Res.">
        <title>Prediction of the coding sequences of mouse homologues of KIAA gene: IV. The complete nucleotide sequences of 500 mouse KIAA-homologous cDNAs identified by screening of terminal sequences of cDNA clones randomly sampled from size-fractionated libraries.</title>
        <authorList>
            <person name="Okazaki N."/>
            <person name="Kikuno R."/>
            <person name="Ohara R."/>
            <person name="Inamoto S."/>
            <person name="Koseki H."/>
            <person name="Hiraoka S."/>
            <person name="Saga Y."/>
            <person name="Seino S."/>
            <person name="Nishimura M."/>
            <person name="Kaisho T."/>
            <person name="Hoshino K."/>
            <person name="Kitamura H."/>
            <person name="Nagase T."/>
            <person name="Ohara O."/>
            <person name="Koga H."/>
        </authorList>
    </citation>
    <scope>NUCLEOTIDE SEQUENCE [LARGE SCALE MRNA]</scope>
    <source>
        <tissue>Fetal brain</tissue>
    </source>
</reference>
<reference key="2">
    <citation type="journal article" date="2004" name="Genome Res.">
        <title>The status, quality, and expansion of the NIH full-length cDNA project: the Mammalian Gene Collection (MGC).</title>
        <authorList>
            <consortium name="The MGC Project Team"/>
        </authorList>
    </citation>
    <scope>NUCLEOTIDE SEQUENCE [LARGE SCALE MRNA]</scope>
    <source>
        <tissue>Brain</tissue>
    </source>
</reference>
<reference key="3">
    <citation type="journal article" date="2009" name="Immunity">
        <title>The phagosomal proteome in interferon-gamma-activated macrophages.</title>
        <authorList>
            <person name="Trost M."/>
            <person name="English L."/>
            <person name="Lemieux S."/>
            <person name="Courcelles M."/>
            <person name="Desjardins M."/>
            <person name="Thibault P."/>
        </authorList>
    </citation>
    <scope>PHOSPHORYLATION [LARGE SCALE ANALYSIS] AT SER-205</scope>
    <scope>IDENTIFICATION BY MASS SPECTROMETRY [LARGE SCALE ANALYSIS]</scope>
</reference>
<reference key="4">
    <citation type="journal article" date="2010" name="Cell">
        <title>A tissue-specific atlas of mouse protein phosphorylation and expression.</title>
        <authorList>
            <person name="Huttlin E.L."/>
            <person name="Jedrychowski M.P."/>
            <person name="Elias J.E."/>
            <person name="Goswami T."/>
            <person name="Rad R."/>
            <person name="Beausoleil S.A."/>
            <person name="Villen J."/>
            <person name="Haas W."/>
            <person name="Sowa M.E."/>
            <person name="Gygi S.P."/>
        </authorList>
    </citation>
    <scope>PHOSPHORYLATION [LARGE SCALE ANALYSIS] AT SER-205</scope>
    <scope>IDENTIFICATION BY MASS SPECTROMETRY [LARGE SCALE ANALYSIS]</scope>
    <source>
        <tissue>Brain</tissue>
        <tissue>Brown adipose tissue</tissue>
        <tissue>Heart</tissue>
        <tissue>Kidney</tissue>
        <tissue>Lung</tissue>
        <tissue>Spleen</tissue>
        <tissue>Testis</tissue>
    </source>
</reference>
<reference key="5">
    <citation type="journal article" date="2017" name="PLoS ONE">
        <title>TBC1D12 is a novel Rab11-binding protein that modulates neurite outgrowth of PC12 cells.</title>
        <authorList>
            <person name="Oguchi M.E."/>
            <person name="Noguchi K."/>
            <person name="Fukuda M."/>
        </authorList>
    </citation>
    <scope>SUBCELLULAR LOCATION</scope>
</reference>
<sequence length="696" mass="76810">MMGPEDAGACSGRNAELLPVPGPMGQDGKTVPATSGFSGGAVAAEPPEEAGEEEAPPPRQLLQRYLAAAAGPLKPGLGGAEAEEAAAAAVPAARGSGMTNGDSGFLLRQDRRGPEEARRRRTCGRPCLLEPADEGVDGAGGLDDWAAPLEDPLRSCCLAAGDTDDPDPAAATPAGRAVESAEPSLGLPDARFGSRNTFEVSRRQSAGDLLPSAGPSAPLPAAEQGPGGTTARARRSGGFADFFARNLFPKRTKELKSVVHSAPGWKLFGKVPPRENLQKTSKIIQQEYEARTGRTCKAAPQSSRRKSFALEPLSTTALILEDRPPNLPAKSVEEALRHRQEYDEMVAEAKKREIKEAHKRKRIMKERFKQEESIASAMVIWINEILPNWEVMRSTRRVRELWWQGLPPSVRGKVWSLAVGNELNITPELYEIFLSRAKERWKSFSESSSENDTEGLSVADREASLELIKLDISRTFPSLYIFQKGGPYHDVLHSILGAYTCYRPDVGYVQGMSFIAAVLILNLEEADAFIAFANLLNKPCQLAFFRVDHSMMLKYFATFEVFFEENLSKLFLHFKSYNLTPDIYLIDWIFTLYSKSLPLDLACRVWDVFCRDGEEFLFRTGLGILRLYEDILLQMDFIHIAQFLTKLPEDITSEKLFSCIAAIQMQNSTKKWTQVFASVAKDIKEGDKNTSPALKS</sequence>
<evidence type="ECO:0000250" key="1">
    <source>
        <dbReference type="UniProtKB" id="M0R7T9"/>
    </source>
</evidence>
<evidence type="ECO:0000250" key="2">
    <source>
        <dbReference type="UniProtKB" id="O60347"/>
    </source>
</evidence>
<evidence type="ECO:0000255" key="3"/>
<evidence type="ECO:0000255" key="4">
    <source>
        <dbReference type="PROSITE-ProRule" id="PRU00163"/>
    </source>
</evidence>
<evidence type="ECO:0000256" key="5">
    <source>
        <dbReference type="SAM" id="MobiDB-lite"/>
    </source>
</evidence>
<evidence type="ECO:0000269" key="6">
    <source>
    </source>
</evidence>
<evidence type="ECO:0000305" key="7"/>
<evidence type="ECO:0007744" key="8">
    <source>
    </source>
</evidence>
<evidence type="ECO:0007744" key="9">
    <source>
    </source>
</evidence>
<keyword id="KW-0007">Acetylation</keyword>
<keyword id="KW-0175">Coiled coil</keyword>
<keyword id="KW-0967">Endosome</keyword>
<keyword id="KW-0343">GTPase activation</keyword>
<keyword id="KW-0597">Phosphoprotein</keyword>
<keyword id="KW-1185">Reference proteome</keyword>